<protein>
    <recommendedName>
        <fullName>Pre-mRNA-splicing factor ATP-dependent RNA helicase DHX16</fullName>
        <ecNumber>3.6.4.13</ecNumber>
    </recommendedName>
    <alternativeName>
        <fullName>ATP-dependent RNA helicase #3</fullName>
    </alternativeName>
    <alternativeName>
        <fullName>DEAH-box protein 16</fullName>
    </alternativeName>
</protein>
<feature type="chain" id="PRO_0000055152" description="Pre-mRNA-splicing factor ATP-dependent RNA helicase DHX16">
    <location>
        <begin position="1"/>
        <end position="1044"/>
    </location>
</feature>
<feature type="domain" description="Helicase ATP-binding" evidence="2">
    <location>
        <begin position="412"/>
        <end position="576"/>
    </location>
</feature>
<feature type="domain" description="Helicase C-terminal" evidence="3">
    <location>
        <begin position="601"/>
        <end position="774"/>
    </location>
</feature>
<feature type="region of interest" description="Disordered" evidence="4">
    <location>
        <begin position="101"/>
        <end position="210"/>
    </location>
</feature>
<feature type="region of interest" description="Disordered" evidence="4">
    <location>
        <begin position="374"/>
        <end position="394"/>
    </location>
</feature>
<feature type="short sequence motif" description="DEAH box">
    <location>
        <begin position="523"/>
        <end position="526"/>
    </location>
</feature>
<feature type="compositionally biased region" description="Basic residues" evidence="4">
    <location>
        <begin position="119"/>
        <end position="130"/>
    </location>
</feature>
<feature type="compositionally biased region" description="Acidic residues" evidence="4">
    <location>
        <begin position="134"/>
        <end position="143"/>
    </location>
</feature>
<feature type="compositionally biased region" description="Basic and acidic residues" evidence="4">
    <location>
        <begin position="169"/>
        <end position="210"/>
    </location>
</feature>
<feature type="binding site" evidence="2">
    <location>
        <begin position="425"/>
        <end position="432"/>
    </location>
    <ligand>
        <name>ATP</name>
        <dbReference type="ChEBI" id="CHEBI:30616"/>
    </ligand>
</feature>
<feature type="modified residue" description="Phosphoserine" evidence="1">
    <location>
        <position position="103"/>
    </location>
</feature>
<feature type="modified residue" description="Phosphoserine" evidence="1">
    <location>
        <position position="106"/>
    </location>
</feature>
<feature type="modified residue" description="Phosphoserine" evidence="1">
    <location>
        <position position="107"/>
    </location>
</feature>
<feature type="modified residue" description="Phosphoserine" evidence="1">
    <location>
        <position position="163"/>
    </location>
</feature>
<feature type="modified residue" description="Phosphothreonine" evidence="1">
    <location>
        <position position="715"/>
    </location>
</feature>
<dbReference type="EC" id="3.6.4.13"/>
<dbReference type="EMBL" id="BA000041">
    <property type="protein sequence ID" value="BAC78177.1"/>
    <property type="molecule type" value="Genomic_DNA"/>
</dbReference>
<dbReference type="EMBL" id="AB210151">
    <property type="protein sequence ID" value="BAE92763.1"/>
    <property type="molecule type" value="Genomic_DNA"/>
</dbReference>
<dbReference type="EMBL" id="AB210152">
    <property type="protein sequence ID" value="BAE92764.1"/>
    <property type="molecule type" value="Genomic_DNA"/>
</dbReference>
<dbReference type="RefSeq" id="NP_001035839.1">
    <property type="nucleotide sequence ID" value="NM_001042380.1"/>
</dbReference>
<dbReference type="SMR" id="Q7YR39"/>
<dbReference type="FunCoup" id="Q7YR39">
    <property type="interactions" value="2296"/>
</dbReference>
<dbReference type="STRING" id="9598.ENSPTRP00000080638"/>
<dbReference type="PaxDb" id="9598-ENSPTRP00000030599"/>
<dbReference type="Ensembl" id="ENSPTRT00000033119.5">
    <property type="protein sequence ID" value="ENSPTRP00000030599.4"/>
    <property type="gene ID" value="ENSPTRG00000017935.7"/>
</dbReference>
<dbReference type="GeneID" id="462546"/>
<dbReference type="KEGG" id="ptr:462546"/>
<dbReference type="CTD" id="8449"/>
<dbReference type="VGNC" id="VGNC:11059">
    <property type="gene designation" value="DHX16"/>
</dbReference>
<dbReference type="eggNOG" id="KOG0923">
    <property type="taxonomic scope" value="Eukaryota"/>
</dbReference>
<dbReference type="GeneTree" id="ENSGT00940000158480"/>
<dbReference type="HOGENOM" id="CLU_001832_7_1_1"/>
<dbReference type="InParanoid" id="Q7YR39"/>
<dbReference type="OrthoDB" id="13079at9604"/>
<dbReference type="TreeFam" id="TF313473"/>
<dbReference type="Proteomes" id="UP000002277">
    <property type="component" value="Chromosome 6"/>
</dbReference>
<dbReference type="Bgee" id="ENSPTRG00000017935">
    <property type="expression patterns" value="Expressed in cortex of kidney and 21 other cell types or tissues"/>
</dbReference>
<dbReference type="GO" id="GO:0005737">
    <property type="term" value="C:cytoplasm"/>
    <property type="evidence" value="ECO:0007669"/>
    <property type="project" value="UniProtKB-SubCell"/>
</dbReference>
<dbReference type="GO" id="GO:0005654">
    <property type="term" value="C:nucleoplasm"/>
    <property type="evidence" value="ECO:0000250"/>
    <property type="project" value="UniProtKB"/>
</dbReference>
<dbReference type="GO" id="GO:0005634">
    <property type="term" value="C:nucleus"/>
    <property type="evidence" value="ECO:0000250"/>
    <property type="project" value="UniProtKB"/>
</dbReference>
<dbReference type="GO" id="GO:0071005">
    <property type="term" value="C:U2-type precatalytic spliceosome"/>
    <property type="evidence" value="ECO:0000250"/>
    <property type="project" value="UniProtKB"/>
</dbReference>
<dbReference type="GO" id="GO:0005524">
    <property type="term" value="F:ATP binding"/>
    <property type="evidence" value="ECO:0007669"/>
    <property type="project" value="UniProtKB-KW"/>
</dbReference>
<dbReference type="GO" id="GO:0016887">
    <property type="term" value="F:ATP hydrolysis activity"/>
    <property type="evidence" value="ECO:0007669"/>
    <property type="project" value="RHEA"/>
</dbReference>
<dbReference type="GO" id="GO:0004386">
    <property type="term" value="F:helicase activity"/>
    <property type="evidence" value="ECO:0000318"/>
    <property type="project" value="GO_Central"/>
</dbReference>
<dbReference type="GO" id="GO:0003723">
    <property type="term" value="F:RNA binding"/>
    <property type="evidence" value="ECO:0000318"/>
    <property type="project" value="GO_Central"/>
</dbReference>
<dbReference type="GO" id="GO:0003724">
    <property type="term" value="F:RNA helicase activity"/>
    <property type="evidence" value="ECO:0007669"/>
    <property type="project" value="UniProtKB-EC"/>
</dbReference>
<dbReference type="GO" id="GO:0045087">
    <property type="term" value="P:innate immune response"/>
    <property type="evidence" value="ECO:0007669"/>
    <property type="project" value="UniProtKB-KW"/>
</dbReference>
<dbReference type="GO" id="GO:0000398">
    <property type="term" value="P:mRNA splicing, via spliceosome"/>
    <property type="evidence" value="ECO:0000250"/>
    <property type="project" value="UniProtKB"/>
</dbReference>
<dbReference type="CDD" id="cd17974">
    <property type="entry name" value="DEXHc_DHX16"/>
    <property type="match status" value="1"/>
</dbReference>
<dbReference type="CDD" id="cd18791">
    <property type="entry name" value="SF2_C_RHA"/>
    <property type="match status" value="1"/>
</dbReference>
<dbReference type="FunFam" id="1.20.120.1080:FF:000001">
    <property type="entry name" value="Pre-mRNA-splicing factor ATP-dependent RNA helicase"/>
    <property type="match status" value="1"/>
</dbReference>
<dbReference type="FunFam" id="3.40.50.300:FF:000007">
    <property type="entry name" value="Pre-mRNA-splicing factor ATP-dependent RNA helicase"/>
    <property type="match status" value="1"/>
</dbReference>
<dbReference type="FunFam" id="3.40.50.300:FF:000818">
    <property type="entry name" value="pre-mRNA-splicing factor ATP-dependent RNA helicase DHX16"/>
    <property type="match status" value="1"/>
</dbReference>
<dbReference type="Gene3D" id="1.20.120.1080">
    <property type="match status" value="1"/>
</dbReference>
<dbReference type="Gene3D" id="3.40.50.300">
    <property type="entry name" value="P-loop containing nucleotide triphosphate hydrolases"/>
    <property type="match status" value="2"/>
</dbReference>
<dbReference type="InterPro" id="IPR011709">
    <property type="entry name" value="DEAD-box_helicase_OB_fold"/>
</dbReference>
<dbReference type="InterPro" id="IPR011545">
    <property type="entry name" value="DEAD/DEAH_box_helicase_dom"/>
</dbReference>
<dbReference type="InterPro" id="IPR002464">
    <property type="entry name" value="DNA/RNA_helicase_DEAH_CS"/>
</dbReference>
<dbReference type="InterPro" id="IPR048333">
    <property type="entry name" value="HA2_WH"/>
</dbReference>
<dbReference type="InterPro" id="IPR007502">
    <property type="entry name" value="Helicase-assoc_dom"/>
</dbReference>
<dbReference type="InterPro" id="IPR014001">
    <property type="entry name" value="Helicase_ATP-bd"/>
</dbReference>
<dbReference type="InterPro" id="IPR001650">
    <property type="entry name" value="Helicase_C-like"/>
</dbReference>
<dbReference type="InterPro" id="IPR027417">
    <property type="entry name" value="P-loop_NTPase"/>
</dbReference>
<dbReference type="PANTHER" id="PTHR18934">
    <property type="entry name" value="ATP-DEPENDENT RNA HELICASE"/>
    <property type="match status" value="1"/>
</dbReference>
<dbReference type="PANTHER" id="PTHR18934:SF83">
    <property type="entry name" value="PRE-MRNA-SPLICING FACTOR ATP-DEPENDENT RNA HELICASE DHX16"/>
    <property type="match status" value="1"/>
</dbReference>
<dbReference type="Pfam" id="PF00270">
    <property type="entry name" value="DEAD"/>
    <property type="match status" value="1"/>
</dbReference>
<dbReference type="Pfam" id="PF21010">
    <property type="entry name" value="HA2_C"/>
    <property type="match status" value="1"/>
</dbReference>
<dbReference type="Pfam" id="PF04408">
    <property type="entry name" value="HA2_N"/>
    <property type="match status" value="1"/>
</dbReference>
<dbReference type="Pfam" id="PF00271">
    <property type="entry name" value="Helicase_C"/>
    <property type="match status" value="1"/>
</dbReference>
<dbReference type="Pfam" id="PF07717">
    <property type="entry name" value="OB_NTP_bind"/>
    <property type="match status" value="1"/>
</dbReference>
<dbReference type="SMART" id="SM00487">
    <property type="entry name" value="DEXDc"/>
    <property type="match status" value="1"/>
</dbReference>
<dbReference type="SMART" id="SM00847">
    <property type="entry name" value="HA2"/>
    <property type="match status" value="1"/>
</dbReference>
<dbReference type="SMART" id="SM00490">
    <property type="entry name" value="HELICc"/>
    <property type="match status" value="1"/>
</dbReference>
<dbReference type="SUPFAM" id="SSF52540">
    <property type="entry name" value="P-loop containing nucleoside triphosphate hydrolases"/>
    <property type="match status" value="1"/>
</dbReference>
<dbReference type="PROSITE" id="PS00690">
    <property type="entry name" value="DEAH_ATP_HELICASE"/>
    <property type="match status" value="1"/>
</dbReference>
<dbReference type="PROSITE" id="PS51192">
    <property type="entry name" value="HELICASE_ATP_BIND_1"/>
    <property type="match status" value="1"/>
</dbReference>
<dbReference type="PROSITE" id="PS51194">
    <property type="entry name" value="HELICASE_CTER"/>
    <property type="match status" value="1"/>
</dbReference>
<evidence type="ECO:0000250" key="1">
    <source>
        <dbReference type="UniProtKB" id="O60231"/>
    </source>
</evidence>
<evidence type="ECO:0000255" key="2">
    <source>
        <dbReference type="PROSITE-ProRule" id="PRU00541"/>
    </source>
</evidence>
<evidence type="ECO:0000255" key="3">
    <source>
        <dbReference type="PROSITE-ProRule" id="PRU00542"/>
    </source>
</evidence>
<evidence type="ECO:0000256" key="4">
    <source>
        <dbReference type="SAM" id="MobiDB-lite"/>
    </source>
</evidence>
<evidence type="ECO:0000305" key="5"/>
<proteinExistence type="inferred from homology"/>
<name>DHX16_PANTR</name>
<comment type="function">
    <text evidence="1">Required for pre-mRNA splicing as a component of the spliceosome. Contributes to pre-mRNA splicing after spliceosome formation and prior to the first transesterification reaction. As a component of the minor spliceosome, involved in the splicing of U12-type introns in pre-mRNAs. Also plays a role in innate antiviral response by acting as a pattern recognition receptor sensing splicing signals in viral RNA. Mechanistically, TRIM6 promotes the interaction between unanchored 'Lys-48'-polyubiquitin chains and DHX16, leading to DHX16 interaction with RIGI and ssRNA to amplify RIGI-dependent innate antiviral immune responses.</text>
</comment>
<comment type="catalytic activity">
    <reaction>
        <text>ATP + H2O = ADP + phosphate + H(+)</text>
        <dbReference type="Rhea" id="RHEA:13065"/>
        <dbReference type="ChEBI" id="CHEBI:15377"/>
        <dbReference type="ChEBI" id="CHEBI:15378"/>
        <dbReference type="ChEBI" id="CHEBI:30616"/>
        <dbReference type="ChEBI" id="CHEBI:43474"/>
        <dbReference type="ChEBI" id="CHEBI:456216"/>
        <dbReference type="EC" id="3.6.4.13"/>
    </reaction>
</comment>
<comment type="subunit">
    <text evidence="1">Component of pre-catalytic spliceosome complexes. Component of the minor spliceosome, which splices U12-type introns. Interacts with GPKOW. Interacts with TRIM6. Interacts with RIGI.</text>
</comment>
<comment type="subcellular location">
    <subcellularLocation>
        <location evidence="1">Nucleus</location>
    </subcellularLocation>
    <subcellularLocation>
        <location evidence="1">Nucleus</location>
        <location evidence="1">Nucleoplasm</location>
    </subcellularLocation>
    <subcellularLocation>
        <location evidence="1">Cytoplasm</location>
    </subcellularLocation>
</comment>
<comment type="similarity">
    <text evidence="5">Belongs to the DEAD box helicase family. DEAH subfamily. DDX16/PRP8 sub-subfamily.</text>
</comment>
<sequence>MATPAGLERWVQDELHSVLGLSERHVAQFLIGTAQRCTSAEEFVQRLRDTDTLDLSGPARDFALRLWNKVPRKAVVEKPARAAEREARALLEKNRSYRLLEDSEESSEETVSRAGSSLQKKRKKRKHLRKKREEEEEEEEEEASEKGKKKTGGSKQQTEKPESEDEWERTERERLQDLEERDAFAERVRQRDKDRTRNVLERSDKKAYEEAQKRLKMAEEDRKAMVPELRKKSRREYLAKREREKLEDLEAELADEEFLFGDVELSRHERQELKYKRRVRDLAREYRAAGEQEKLEATNRYHMPKETRGQPARAVDLVEEESGAPGEEQRRWEEARLGAASLKFGARDAASQEPKYQLVLEEEETIEFVRATQLQGNEEPSAPPTSTQAQQKESIQAVRRSLPVFPFREELLAAIANHQVLIIEGETGSGKTTQIPQYLFEEGYTNKGMKIACTQPRRVAAMSVAARVAREMGVKLGNEVGYSIRFEDCTSERTVLRYMTDGMLLREFLSEPDLASYSVVMVDEAHERTLHTDILFGLIKDVARFRPELKVLVASATMDTARFSTFFDDAPVFRIPGRRFPVDIFYTKAPEADYLEACVVSVLQIHVTQPPGDILVFLTGQEEIEAACEMLQDRCRRLGSKIRELLVLPIYANLPSDMQARIFQPTPPGARKVVVATNIAETSLTIEGIIYVLDPGFCKQKSYNPRTGMESLTVTPCSKASANQRAGRAGRVAAGKCFRLYTAWAYQHELEETTVPEIQRTSLGNVVLLLKSLGIHDLMHFDFLDPPPYETLLLALEQLYALGALNHLGELTTSGRKMAELPVDPMLSKMILASEKYSCSEEILTVAAMLSVNNSIFYRPKDKVVHADNARVNFFLPGGDHLVLLNVYTQWAESGYSSQWCYENFVQFRSMRRARDVREQLEGLLERVEVGLSSCQGDYIRVRKAITAGYFYHTARLTRSGYRTVKQQQTVFIHPNSSLFEQQPRWLLYHELVLTTKEFMRQVLEIESSWLLEVAPHYYKAKELEDPHAKKMPKKIGKTREELG</sequence>
<organism>
    <name type="scientific">Pan troglodytes</name>
    <name type="common">Chimpanzee</name>
    <dbReference type="NCBI Taxonomy" id="9598"/>
    <lineage>
        <taxon>Eukaryota</taxon>
        <taxon>Metazoa</taxon>
        <taxon>Chordata</taxon>
        <taxon>Craniata</taxon>
        <taxon>Vertebrata</taxon>
        <taxon>Euteleostomi</taxon>
        <taxon>Mammalia</taxon>
        <taxon>Eutheria</taxon>
        <taxon>Euarchontoglires</taxon>
        <taxon>Primates</taxon>
        <taxon>Haplorrhini</taxon>
        <taxon>Catarrhini</taxon>
        <taxon>Hominidae</taxon>
        <taxon>Pan</taxon>
    </lineage>
</organism>
<keyword id="KW-0067">ATP-binding</keyword>
<keyword id="KW-0963">Cytoplasm</keyword>
<keyword id="KW-0347">Helicase</keyword>
<keyword id="KW-0378">Hydrolase</keyword>
<keyword id="KW-0391">Immunity</keyword>
<keyword id="KW-0399">Innate immunity</keyword>
<keyword id="KW-0507">mRNA processing</keyword>
<keyword id="KW-0508">mRNA splicing</keyword>
<keyword id="KW-0547">Nucleotide-binding</keyword>
<keyword id="KW-0539">Nucleus</keyword>
<keyword id="KW-0597">Phosphoprotein</keyword>
<keyword id="KW-1185">Reference proteome</keyword>
<keyword id="KW-0747">Spliceosome</keyword>
<accession>Q7YR39</accession>
<accession>Q1XI06</accession>
<gene>
    <name type="primary">DHX16</name>
    <name type="synonym">DBP2</name>
    <name type="synonym">DDX16</name>
</gene>
<reference key="1">
    <citation type="journal article" date="2003" name="Proc. Natl. Acad. Sci. U.S.A.">
        <title>Comparative sequencing of human and chimpanzee MHC class I regions unveils insertions/deletions as the major path to genomic divergence.</title>
        <authorList>
            <person name="Anzai T."/>
            <person name="Shiina T."/>
            <person name="Kimura N."/>
            <person name="Yanagiya K."/>
            <person name="Kohara S."/>
            <person name="Shigenari A."/>
            <person name="Yamagata T."/>
            <person name="Kulski J.K."/>
            <person name="Naruse T.K."/>
            <person name="Fujimori Y."/>
            <person name="Fukuzumi Y."/>
            <person name="Yamazaki M."/>
            <person name="Tashiro H."/>
            <person name="Iwamoto C."/>
            <person name="Umehara Y."/>
            <person name="Imanishi T."/>
            <person name="Meyer A."/>
            <person name="Ikeo K."/>
            <person name="Gojobori T."/>
            <person name="Bahram S."/>
            <person name="Inoko H."/>
        </authorList>
    </citation>
    <scope>NUCLEOTIDE SEQUENCE [LARGE SCALE GENOMIC DNA]</scope>
</reference>
<reference key="2">
    <citation type="journal article" date="2006" name="Genetics">
        <title>Rapid evolution of major histocompatibility complex class I genes in primates generates new disease alleles in humans via hitchhiking diversity.</title>
        <authorList>
            <person name="Shiina T."/>
            <person name="Ota M."/>
            <person name="Shimizu S."/>
            <person name="Katsuyama Y."/>
            <person name="Hashimoto N."/>
            <person name="Takasu M."/>
            <person name="Anzai T."/>
            <person name="Kulski J.K."/>
            <person name="Kikkawa E."/>
            <person name="Naruse T."/>
            <person name="Kimura N."/>
            <person name="Yanagiya K."/>
            <person name="Watanabe A."/>
            <person name="Hosomichi K."/>
            <person name="Kohara S."/>
            <person name="Iwamoto C."/>
            <person name="Umehara Y."/>
            <person name="Meyer A."/>
            <person name="Wanner V."/>
            <person name="Sano K."/>
            <person name="Macquin C."/>
            <person name="Ikeo K."/>
            <person name="Tokunaga K."/>
            <person name="Gojobori T."/>
            <person name="Inoko H."/>
            <person name="Bahram S."/>
        </authorList>
    </citation>
    <scope>NUCLEOTIDE SEQUENCE [LARGE SCALE GENOMIC DNA]</scope>
</reference>